<protein>
    <recommendedName>
        <fullName evidence="1">Glycine cleavage system H protein</fullName>
    </recommendedName>
</protein>
<comment type="function">
    <text evidence="1">The glycine cleavage system catalyzes the degradation of glycine. The H protein shuttles the methylamine group of glycine from the P protein to the T protein.</text>
</comment>
<comment type="cofactor">
    <cofactor evidence="1">
        <name>(R)-lipoate</name>
        <dbReference type="ChEBI" id="CHEBI:83088"/>
    </cofactor>
    <text evidence="1">Binds 1 lipoyl cofactor covalently.</text>
</comment>
<comment type="subunit">
    <text evidence="1">The glycine cleavage system is composed of four proteins: P, T, L and H.</text>
</comment>
<comment type="similarity">
    <text evidence="1">Belongs to the GcvH family.</text>
</comment>
<gene>
    <name evidence="1" type="primary">gcvH</name>
    <name type="ordered locus">Sputcn32_3210</name>
</gene>
<evidence type="ECO:0000255" key="1">
    <source>
        <dbReference type="HAMAP-Rule" id="MF_00272"/>
    </source>
</evidence>
<evidence type="ECO:0000255" key="2">
    <source>
        <dbReference type="PROSITE-ProRule" id="PRU01066"/>
    </source>
</evidence>
<organism>
    <name type="scientific">Shewanella putrefaciens (strain CN-32 / ATCC BAA-453)</name>
    <dbReference type="NCBI Taxonomy" id="319224"/>
    <lineage>
        <taxon>Bacteria</taxon>
        <taxon>Pseudomonadati</taxon>
        <taxon>Pseudomonadota</taxon>
        <taxon>Gammaproteobacteria</taxon>
        <taxon>Alteromonadales</taxon>
        <taxon>Shewanellaceae</taxon>
        <taxon>Shewanella</taxon>
    </lineage>
</organism>
<accession>A4YAD9</accession>
<name>GCSH_SHEPC</name>
<proteinExistence type="inferred from homology"/>
<keyword id="KW-0450">Lipoyl</keyword>
<dbReference type="EMBL" id="CP000681">
    <property type="protein sequence ID" value="ABP76922.1"/>
    <property type="molecule type" value="Genomic_DNA"/>
</dbReference>
<dbReference type="SMR" id="A4YAD9"/>
<dbReference type="STRING" id="319224.Sputcn32_3210"/>
<dbReference type="KEGG" id="spc:Sputcn32_3210"/>
<dbReference type="eggNOG" id="COG0509">
    <property type="taxonomic scope" value="Bacteria"/>
</dbReference>
<dbReference type="HOGENOM" id="CLU_097408_2_1_6"/>
<dbReference type="GO" id="GO:0005829">
    <property type="term" value="C:cytosol"/>
    <property type="evidence" value="ECO:0007669"/>
    <property type="project" value="TreeGrafter"/>
</dbReference>
<dbReference type="GO" id="GO:0005960">
    <property type="term" value="C:glycine cleavage complex"/>
    <property type="evidence" value="ECO:0007669"/>
    <property type="project" value="InterPro"/>
</dbReference>
<dbReference type="GO" id="GO:0019464">
    <property type="term" value="P:glycine decarboxylation via glycine cleavage system"/>
    <property type="evidence" value="ECO:0007669"/>
    <property type="project" value="UniProtKB-UniRule"/>
</dbReference>
<dbReference type="CDD" id="cd06848">
    <property type="entry name" value="GCS_H"/>
    <property type="match status" value="1"/>
</dbReference>
<dbReference type="FunFam" id="2.40.50.100:FF:000011">
    <property type="entry name" value="Glycine cleavage system H protein"/>
    <property type="match status" value="1"/>
</dbReference>
<dbReference type="Gene3D" id="2.40.50.100">
    <property type="match status" value="1"/>
</dbReference>
<dbReference type="HAMAP" id="MF_00272">
    <property type="entry name" value="GcvH"/>
    <property type="match status" value="1"/>
</dbReference>
<dbReference type="InterPro" id="IPR003016">
    <property type="entry name" value="2-oxoA_DH_lipoyl-BS"/>
</dbReference>
<dbReference type="InterPro" id="IPR000089">
    <property type="entry name" value="Biotin_lipoyl"/>
</dbReference>
<dbReference type="InterPro" id="IPR002930">
    <property type="entry name" value="GCV_H"/>
</dbReference>
<dbReference type="InterPro" id="IPR033753">
    <property type="entry name" value="GCV_H/Fam206"/>
</dbReference>
<dbReference type="InterPro" id="IPR017453">
    <property type="entry name" value="GCV_H_sub"/>
</dbReference>
<dbReference type="InterPro" id="IPR011053">
    <property type="entry name" value="Single_hybrid_motif"/>
</dbReference>
<dbReference type="NCBIfam" id="TIGR00527">
    <property type="entry name" value="gcvH"/>
    <property type="match status" value="1"/>
</dbReference>
<dbReference type="NCBIfam" id="NF002270">
    <property type="entry name" value="PRK01202.1"/>
    <property type="match status" value="1"/>
</dbReference>
<dbReference type="PANTHER" id="PTHR11715">
    <property type="entry name" value="GLYCINE CLEAVAGE SYSTEM H PROTEIN"/>
    <property type="match status" value="1"/>
</dbReference>
<dbReference type="PANTHER" id="PTHR11715:SF3">
    <property type="entry name" value="GLYCINE CLEAVAGE SYSTEM H PROTEIN-RELATED"/>
    <property type="match status" value="1"/>
</dbReference>
<dbReference type="Pfam" id="PF01597">
    <property type="entry name" value="GCV_H"/>
    <property type="match status" value="1"/>
</dbReference>
<dbReference type="SUPFAM" id="SSF51230">
    <property type="entry name" value="Single hybrid motif"/>
    <property type="match status" value="1"/>
</dbReference>
<dbReference type="PROSITE" id="PS50968">
    <property type="entry name" value="BIOTINYL_LIPOYL"/>
    <property type="match status" value="1"/>
</dbReference>
<dbReference type="PROSITE" id="PS00189">
    <property type="entry name" value="LIPOYL"/>
    <property type="match status" value="1"/>
</dbReference>
<sequence>MSNIPTELKYASSHEWIRKEEDGSYTVGITEHAQELLGDMVFVELPEVGDTVTAGDDCAVAESVKAASDIYAPISGEVIAVNEALEDSPELVNSDAYGEGWFFRVMPSDETEVDALLDAEGYQAVIDEE</sequence>
<feature type="chain" id="PRO_1000022202" description="Glycine cleavage system H protein">
    <location>
        <begin position="1"/>
        <end position="129"/>
    </location>
</feature>
<feature type="domain" description="Lipoyl-binding" evidence="2">
    <location>
        <begin position="24"/>
        <end position="106"/>
    </location>
</feature>
<feature type="modified residue" description="N6-lipoyllysine" evidence="1">
    <location>
        <position position="65"/>
    </location>
</feature>
<reference key="1">
    <citation type="submission" date="2007-04" db="EMBL/GenBank/DDBJ databases">
        <title>Complete sequence of Shewanella putrefaciens CN-32.</title>
        <authorList>
            <consortium name="US DOE Joint Genome Institute"/>
            <person name="Copeland A."/>
            <person name="Lucas S."/>
            <person name="Lapidus A."/>
            <person name="Barry K."/>
            <person name="Detter J.C."/>
            <person name="Glavina del Rio T."/>
            <person name="Hammon N."/>
            <person name="Israni S."/>
            <person name="Dalin E."/>
            <person name="Tice H."/>
            <person name="Pitluck S."/>
            <person name="Chain P."/>
            <person name="Malfatti S."/>
            <person name="Shin M."/>
            <person name="Vergez L."/>
            <person name="Schmutz J."/>
            <person name="Larimer F."/>
            <person name="Land M."/>
            <person name="Hauser L."/>
            <person name="Kyrpides N."/>
            <person name="Mikhailova N."/>
            <person name="Romine M.F."/>
            <person name="Fredrickson J."/>
            <person name="Tiedje J."/>
            <person name="Richardson P."/>
        </authorList>
    </citation>
    <scope>NUCLEOTIDE SEQUENCE [LARGE SCALE GENOMIC DNA]</scope>
    <source>
        <strain>CN-32 / ATCC BAA-453</strain>
    </source>
</reference>